<proteinExistence type="inferred from homology"/>
<sequence>MSQEDKGFPAEVVEIIGRTGVAGEVIQVRAKILAGRDKGRVLTRNVKGPVRVGDILILRETEIEARKLKPR</sequence>
<accession>B1L5N5</accession>
<comment type="similarity">
    <text evidence="1">Belongs to the eukaryotic ribosomal protein eS28 family.</text>
</comment>
<keyword id="KW-1185">Reference proteome</keyword>
<keyword id="KW-0687">Ribonucleoprotein</keyword>
<keyword id="KW-0689">Ribosomal protein</keyword>
<protein>
    <recommendedName>
        <fullName evidence="1">Small ribosomal subunit protein eS28</fullName>
    </recommendedName>
    <alternativeName>
        <fullName evidence="2">30S ribosomal protein S28e</fullName>
    </alternativeName>
</protein>
<evidence type="ECO:0000255" key="1">
    <source>
        <dbReference type="HAMAP-Rule" id="MF_00292"/>
    </source>
</evidence>
<evidence type="ECO:0000305" key="2"/>
<name>RS28_KORCO</name>
<dbReference type="EMBL" id="CP000968">
    <property type="protein sequence ID" value="ACB07764.1"/>
    <property type="molecule type" value="Genomic_DNA"/>
</dbReference>
<dbReference type="RefSeq" id="WP_012309661.1">
    <property type="nucleotide sequence ID" value="NC_010482.1"/>
</dbReference>
<dbReference type="SMR" id="B1L5N5"/>
<dbReference type="FunCoup" id="B1L5N5">
    <property type="interactions" value="152"/>
</dbReference>
<dbReference type="STRING" id="374847.Kcr_1018"/>
<dbReference type="EnsemblBacteria" id="ACB07764">
    <property type="protein sequence ID" value="ACB07764"/>
    <property type="gene ID" value="Kcr_1018"/>
</dbReference>
<dbReference type="GeneID" id="6094295"/>
<dbReference type="KEGG" id="kcr:Kcr_1018"/>
<dbReference type="eggNOG" id="arCOG04314">
    <property type="taxonomic scope" value="Archaea"/>
</dbReference>
<dbReference type="HOGENOM" id="CLU_178987_2_1_2"/>
<dbReference type="InParanoid" id="B1L5N5"/>
<dbReference type="OrthoDB" id="7620at2157"/>
<dbReference type="PhylomeDB" id="B1L5N5"/>
<dbReference type="Proteomes" id="UP000001686">
    <property type="component" value="Chromosome"/>
</dbReference>
<dbReference type="GO" id="GO:0022627">
    <property type="term" value="C:cytosolic small ribosomal subunit"/>
    <property type="evidence" value="ECO:0000318"/>
    <property type="project" value="GO_Central"/>
</dbReference>
<dbReference type="GO" id="GO:0003735">
    <property type="term" value="F:structural constituent of ribosome"/>
    <property type="evidence" value="ECO:0000318"/>
    <property type="project" value="GO_Central"/>
</dbReference>
<dbReference type="GO" id="GO:0030490">
    <property type="term" value="P:maturation of SSU-rRNA"/>
    <property type="evidence" value="ECO:0000318"/>
    <property type="project" value="GO_Central"/>
</dbReference>
<dbReference type="GO" id="GO:0000028">
    <property type="term" value="P:ribosomal small subunit assembly"/>
    <property type="evidence" value="ECO:0000318"/>
    <property type="project" value="GO_Central"/>
</dbReference>
<dbReference type="GO" id="GO:0006412">
    <property type="term" value="P:translation"/>
    <property type="evidence" value="ECO:0007669"/>
    <property type="project" value="UniProtKB-UniRule"/>
</dbReference>
<dbReference type="CDD" id="cd04457">
    <property type="entry name" value="S1_S28E"/>
    <property type="match status" value="1"/>
</dbReference>
<dbReference type="FunFam" id="2.40.50.140:FF:000145">
    <property type="entry name" value="30S ribosomal protein S28e"/>
    <property type="match status" value="1"/>
</dbReference>
<dbReference type="Gene3D" id="2.40.50.140">
    <property type="entry name" value="Nucleic acid-binding proteins"/>
    <property type="match status" value="1"/>
</dbReference>
<dbReference type="HAMAP" id="MF_00292">
    <property type="entry name" value="Ribosomal_eS28"/>
    <property type="match status" value="1"/>
</dbReference>
<dbReference type="InterPro" id="IPR012340">
    <property type="entry name" value="NA-bd_OB-fold"/>
</dbReference>
<dbReference type="InterPro" id="IPR000289">
    <property type="entry name" value="Ribosomal_eS28"/>
</dbReference>
<dbReference type="NCBIfam" id="NF003080">
    <property type="entry name" value="PRK04007.1"/>
    <property type="match status" value="1"/>
</dbReference>
<dbReference type="PANTHER" id="PTHR10769">
    <property type="entry name" value="40S RIBOSOMAL PROTEIN S28"/>
    <property type="match status" value="1"/>
</dbReference>
<dbReference type="PANTHER" id="PTHR10769:SF3">
    <property type="entry name" value="SMALL RIBOSOMAL SUBUNIT PROTEIN ES28"/>
    <property type="match status" value="1"/>
</dbReference>
<dbReference type="Pfam" id="PF01200">
    <property type="entry name" value="Ribosomal_S28e"/>
    <property type="match status" value="1"/>
</dbReference>
<dbReference type="SUPFAM" id="SSF50249">
    <property type="entry name" value="Nucleic acid-binding proteins"/>
    <property type="match status" value="1"/>
</dbReference>
<reference key="1">
    <citation type="journal article" date="2008" name="Proc. Natl. Acad. Sci. U.S.A.">
        <title>A korarchaeal genome reveals new insights into the evolution of the Archaea.</title>
        <authorList>
            <person name="Elkins J.G."/>
            <person name="Podar M."/>
            <person name="Graham D.E."/>
            <person name="Makarova K.S."/>
            <person name="Wolf Y."/>
            <person name="Randau L."/>
            <person name="Hedlund B.P."/>
            <person name="Brochier-Armanet C."/>
            <person name="Kunin V."/>
            <person name="Anderson I."/>
            <person name="Lapidus A."/>
            <person name="Goltsman E."/>
            <person name="Barry K."/>
            <person name="Koonin E.V."/>
            <person name="Hugenholtz P."/>
            <person name="Kyrpides N."/>
            <person name="Wanner G."/>
            <person name="Richardson P."/>
            <person name="Keller M."/>
            <person name="Stetter K.O."/>
        </authorList>
    </citation>
    <scope>NUCLEOTIDE SEQUENCE [LARGE SCALE GENOMIC DNA]</scope>
    <source>
        <strain>OPF8</strain>
    </source>
</reference>
<organism>
    <name type="scientific">Korarchaeum cryptofilum (strain OPF8)</name>
    <dbReference type="NCBI Taxonomy" id="374847"/>
    <lineage>
        <taxon>Archaea</taxon>
        <taxon>Thermoproteota</taxon>
        <taxon>Candidatus Korarchaeia</taxon>
        <taxon>Candidatus Korarchaeales</taxon>
        <taxon>Candidatus Korarchaeaceae</taxon>
        <taxon>Candidatus Korarchaeum</taxon>
    </lineage>
</organism>
<gene>
    <name evidence="1" type="primary">rps28e</name>
    <name type="ordered locus">Kcr_1018</name>
</gene>
<feature type="chain" id="PRO_1000115083" description="Small ribosomal subunit protein eS28">
    <location>
        <begin position="1"/>
        <end position="71"/>
    </location>
</feature>